<gene>
    <name evidence="1" type="primary">groEL</name>
    <name evidence="1" type="synonym">groL</name>
    <name type="ordered locus">Lferr_0698</name>
</gene>
<dbReference type="EC" id="5.6.1.7" evidence="1"/>
<dbReference type="EMBL" id="CP001132">
    <property type="protein sequence ID" value="ACH82949.1"/>
    <property type="molecule type" value="Genomic_DNA"/>
</dbReference>
<dbReference type="RefSeq" id="WP_012536194.1">
    <property type="nucleotide sequence ID" value="NC_011206.1"/>
</dbReference>
<dbReference type="SMR" id="B5EN19"/>
<dbReference type="GeneID" id="65279901"/>
<dbReference type="KEGG" id="afe:Lferr_0698"/>
<dbReference type="eggNOG" id="COG0459">
    <property type="taxonomic scope" value="Bacteria"/>
</dbReference>
<dbReference type="HOGENOM" id="CLU_016503_3_0_6"/>
<dbReference type="GO" id="GO:0005737">
    <property type="term" value="C:cytoplasm"/>
    <property type="evidence" value="ECO:0007669"/>
    <property type="project" value="UniProtKB-SubCell"/>
</dbReference>
<dbReference type="GO" id="GO:0005524">
    <property type="term" value="F:ATP binding"/>
    <property type="evidence" value="ECO:0007669"/>
    <property type="project" value="UniProtKB-UniRule"/>
</dbReference>
<dbReference type="GO" id="GO:0140662">
    <property type="term" value="F:ATP-dependent protein folding chaperone"/>
    <property type="evidence" value="ECO:0007669"/>
    <property type="project" value="InterPro"/>
</dbReference>
<dbReference type="GO" id="GO:0016853">
    <property type="term" value="F:isomerase activity"/>
    <property type="evidence" value="ECO:0007669"/>
    <property type="project" value="UniProtKB-KW"/>
</dbReference>
<dbReference type="GO" id="GO:0051082">
    <property type="term" value="F:unfolded protein binding"/>
    <property type="evidence" value="ECO:0007669"/>
    <property type="project" value="UniProtKB-UniRule"/>
</dbReference>
<dbReference type="GO" id="GO:0042026">
    <property type="term" value="P:protein refolding"/>
    <property type="evidence" value="ECO:0007669"/>
    <property type="project" value="UniProtKB-UniRule"/>
</dbReference>
<dbReference type="CDD" id="cd03344">
    <property type="entry name" value="GroEL"/>
    <property type="match status" value="1"/>
</dbReference>
<dbReference type="FunFam" id="1.10.560.10:FF:000001">
    <property type="entry name" value="60 kDa chaperonin"/>
    <property type="match status" value="1"/>
</dbReference>
<dbReference type="FunFam" id="3.50.7.10:FF:000001">
    <property type="entry name" value="60 kDa chaperonin"/>
    <property type="match status" value="1"/>
</dbReference>
<dbReference type="Gene3D" id="3.50.7.10">
    <property type="entry name" value="GroEL"/>
    <property type="match status" value="1"/>
</dbReference>
<dbReference type="Gene3D" id="1.10.560.10">
    <property type="entry name" value="GroEL-like equatorial domain"/>
    <property type="match status" value="1"/>
</dbReference>
<dbReference type="Gene3D" id="3.30.260.10">
    <property type="entry name" value="TCP-1-like chaperonin intermediate domain"/>
    <property type="match status" value="1"/>
</dbReference>
<dbReference type="HAMAP" id="MF_00600">
    <property type="entry name" value="CH60"/>
    <property type="match status" value="1"/>
</dbReference>
<dbReference type="InterPro" id="IPR018370">
    <property type="entry name" value="Chaperonin_Cpn60_CS"/>
</dbReference>
<dbReference type="InterPro" id="IPR001844">
    <property type="entry name" value="Cpn60/GroEL"/>
</dbReference>
<dbReference type="InterPro" id="IPR002423">
    <property type="entry name" value="Cpn60/GroEL/TCP-1"/>
</dbReference>
<dbReference type="InterPro" id="IPR027409">
    <property type="entry name" value="GroEL-like_apical_dom_sf"/>
</dbReference>
<dbReference type="InterPro" id="IPR027413">
    <property type="entry name" value="GROEL-like_equatorial_sf"/>
</dbReference>
<dbReference type="InterPro" id="IPR027410">
    <property type="entry name" value="TCP-1-like_intermed_sf"/>
</dbReference>
<dbReference type="NCBIfam" id="TIGR02348">
    <property type="entry name" value="GroEL"/>
    <property type="match status" value="1"/>
</dbReference>
<dbReference type="NCBIfam" id="NF000592">
    <property type="entry name" value="PRK00013.1"/>
    <property type="match status" value="1"/>
</dbReference>
<dbReference type="NCBIfam" id="NF009487">
    <property type="entry name" value="PRK12849.1"/>
    <property type="match status" value="1"/>
</dbReference>
<dbReference type="NCBIfam" id="NF009488">
    <property type="entry name" value="PRK12850.1"/>
    <property type="match status" value="1"/>
</dbReference>
<dbReference type="NCBIfam" id="NF009489">
    <property type="entry name" value="PRK12851.1"/>
    <property type="match status" value="1"/>
</dbReference>
<dbReference type="PANTHER" id="PTHR45633">
    <property type="entry name" value="60 KDA HEAT SHOCK PROTEIN, MITOCHONDRIAL"/>
    <property type="match status" value="1"/>
</dbReference>
<dbReference type="Pfam" id="PF00118">
    <property type="entry name" value="Cpn60_TCP1"/>
    <property type="match status" value="1"/>
</dbReference>
<dbReference type="PRINTS" id="PR00298">
    <property type="entry name" value="CHAPERONIN60"/>
</dbReference>
<dbReference type="SUPFAM" id="SSF52029">
    <property type="entry name" value="GroEL apical domain-like"/>
    <property type="match status" value="1"/>
</dbReference>
<dbReference type="SUPFAM" id="SSF48592">
    <property type="entry name" value="GroEL equatorial domain-like"/>
    <property type="match status" value="1"/>
</dbReference>
<dbReference type="SUPFAM" id="SSF54849">
    <property type="entry name" value="GroEL-intermediate domain like"/>
    <property type="match status" value="1"/>
</dbReference>
<dbReference type="PROSITE" id="PS00296">
    <property type="entry name" value="CHAPERONINS_CPN60"/>
    <property type="match status" value="1"/>
</dbReference>
<name>CH60_ACIF5</name>
<reference key="1">
    <citation type="submission" date="2008-08" db="EMBL/GenBank/DDBJ databases">
        <title>Complete sequence of Acidithiobacillus ferrooxidans ATCC 53993.</title>
        <authorList>
            <person name="Lucas S."/>
            <person name="Copeland A."/>
            <person name="Lapidus A."/>
            <person name="Glavina del Rio T."/>
            <person name="Dalin E."/>
            <person name="Tice H."/>
            <person name="Bruce D."/>
            <person name="Goodwin L."/>
            <person name="Pitluck S."/>
            <person name="Sims D."/>
            <person name="Brettin T."/>
            <person name="Detter J.C."/>
            <person name="Han C."/>
            <person name="Kuske C.R."/>
            <person name="Larimer F."/>
            <person name="Land M."/>
            <person name="Hauser L."/>
            <person name="Kyrpides N."/>
            <person name="Lykidis A."/>
            <person name="Borole A.P."/>
        </authorList>
    </citation>
    <scope>NUCLEOTIDE SEQUENCE [LARGE SCALE GENOMIC DNA]</scope>
    <source>
        <strain>ATCC 53993 / BNL-5-31</strain>
    </source>
</reference>
<keyword id="KW-0067">ATP-binding</keyword>
<keyword id="KW-0143">Chaperone</keyword>
<keyword id="KW-0963">Cytoplasm</keyword>
<keyword id="KW-0413">Isomerase</keyword>
<keyword id="KW-0547">Nucleotide-binding</keyword>
<proteinExistence type="inferred from homology"/>
<comment type="function">
    <text evidence="1">Together with its co-chaperonin GroES, plays an essential role in assisting protein folding. The GroEL-GroES system forms a nano-cage that allows encapsulation of the non-native substrate proteins and provides a physical environment optimized to promote and accelerate protein folding.</text>
</comment>
<comment type="catalytic activity">
    <reaction evidence="1">
        <text>ATP + H2O + a folded polypeptide = ADP + phosphate + an unfolded polypeptide.</text>
        <dbReference type="EC" id="5.6.1.7"/>
    </reaction>
</comment>
<comment type="subunit">
    <text evidence="1">Forms a cylinder of 14 subunits composed of two heptameric rings stacked back-to-back. Interacts with the co-chaperonin GroES.</text>
</comment>
<comment type="subcellular location">
    <subcellularLocation>
        <location evidence="1">Cytoplasm</location>
    </subcellularLocation>
</comment>
<comment type="similarity">
    <text evidence="1">Belongs to the chaperonin (HSP60) family.</text>
</comment>
<protein>
    <recommendedName>
        <fullName evidence="1">Chaperonin GroEL</fullName>
        <ecNumber evidence="1">5.6.1.7</ecNumber>
    </recommendedName>
    <alternativeName>
        <fullName evidence="1">60 kDa chaperonin</fullName>
    </alternativeName>
    <alternativeName>
        <fullName evidence="1">Chaperonin-60</fullName>
        <shortName evidence="1">Cpn60</shortName>
    </alternativeName>
</protein>
<organism>
    <name type="scientific">Acidithiobacillus ferrooxidans (strain ATCC 53993 / BNL-5-31)</name>
    <name type="common">Leptospirillum ferrooxidans (ATCC 53993)</name>
    <dbReference type="NCBI Taxonomy" id="380394"/>
    <lineage>
        <taxon>Bacteria</taxon>
        <taxon>Pseudomonadati</taxon>
        <taxon>Pseudomonadota</taxon>
        <taxon>Acidithiobacillia</taxon>
        <taxon>Acidithiobacillales</taxon>
        <taxon>Acidithiobacillaceae</taxon>
        <taxon>Acidithiobacillus</taxon>
    </lineage>
</organism>
<accession>B5EN19</accession>
<feature type="chain" id="PRO_1000129963" description="Chaperonin GroEL">
    <location>
        <begin position="1"/>
        <end position="551"/>
    </location>
</feature>
<feature type="binding site" evidence="1">
    <location>
        <begin position="30"/>
        <end position="33"/>
    </location>
    <ligand>
        <name>ATP</name>
        <dbReference type="ChEBI" id="CHEBI:30616"/>
    </ligand>
</feature>
<feature type="binding site" evidence="1">
    <location>
        <position position="51"/>
    </location>
    <ligand>
        <name>ATP</name>
        <dbReference type="ChEBI" id="CHEBI:30616"/>
    </ligand>
</feature>
<feature type="binding site" evidence="1">
    <location>
        <begin position="87"/>
        <end position="91"/>
    </location>
    <ligand>
        <name>ATP</name>
        <dbReference type="ChEBI" id="CHEBI:30616"/>
    </ligand>
</feature>
<feature type="binding site" evidence="1">
    <location>
        <position position="415"/>
    </location>
    <ligand>
        <name>ATP</name>
        <dbReference type="ChEBI" id="CHEBI:30616"/>
    </ligand>
</feature>
<feature type="binding site" evidence="1">
    <location>
        <begin position="479"/>
        <end position="481"/>
    </location>
    <ligand>
        <name>ATP</name>
        <dbReference type="ChEBI" id="CHEBI:30616"/>
    </ligand>
</feature>
<feature type="binding site" evidence="1">
    <location>
        <position position="495"/>
    </location>
    <ligand>
        <name>ATP</name>
        <dbReference type="ChEBI" id="CHEBI:30616"/>
    </ligand>
</feature>
<evidence type="ECO:0000255" key="1">
    <source>
        <dbReference type="HAMAP-Rule" id="MF_00600"/>
    </source>
</evidence>
<sequence>MPAKQVAFAEHAREKMLRGVNVLADAVKVTLGPKGRNVVLDKSFGAPTITKDGVSVAKEIELADKFENMGAQMVKEVASQASDEAGDGTTTATVLAQAIIREGLKAVIAGMNPMDLKRGIDKSVIVVVEELKKQSKPCKTQKEVAQVGTISANSDDSIGKIIAEAMEKVGNEGVITVEEGSGLANELDVVEGMQFDRGYLSPYFVNNQDKMVAELENPYILLHDKKISSIRDMLPILEQVAKSSRPLLIVAEDVEGEALATLVVNTMRGIIKVAAVKAPGFGDRRKAMLEDMAILTGGRVVSEEIGMKLESTTLADLGQAKKIVIDKENTTMIDGAGQQSEIKARVEQIRRQMEDASSDYDREKLQERVAKLAGGVAVIKVGAGSEMEMKEKKARVEDALHATRAAVEEGIVPGGGVALVRARHALEGFKTANHDQDMGVAIIRRAIEEPLRQIVANAGGEGSVVLNKVVDGKDGYGYNAATDEYGDMFEMGVIDPTKVTRTALQKASSIAGLMITTEAMVTELPKKDDKSGGDMGDMGGGMGGMGGMGGF</sequence>